<comment type="function">
    <text evidence="4 5">Probably involved in biosynthesis of the precursor for C25 (sesterterpanyl chain) moiety of C25-C25 diether (2,3-di-O-sesterterpanyl-sn-glycero) membrane lipid. Catalyzes the condensation of isopentenyl pyrophosphate with the allylic pyrophosphates to yield all-trans geranylfarnesyl diphosphate (GFPP). Geranylgeranyl diphosphate (GGPP) is the preferred substrate, however methylallyl diphosphate (DMAPP), farnesyl diphosphate (FPP) and geranyl diphosphate (GPP) can also be used as allylic substrate.</text>
</comment>
<comment type="catalytic activity">
    <reaction>
        <text>isopentenyl diphosphate + (2E,6E,10E)-geranylgeranyl diphosphate = (2E,6E,10E,14E)-geranylfarnesyl diphosphate + diphosphate</text>
        <dbReference type="Rhea" id="RHEA:25694"/>
        <dbReference type="ChEBI" id="CHEBI:33019"/>
        <dbReference type="ChEBI" id="CHEBI:57907"/>
        <dbReference type="ChEBI" id="CHEBI:58756"/>
        <dbReference type="ChEBI" id="CHEBI:128769"/>
        <dbReference type="EC" id="2.5.1.81"/>
    </reaction>
</comment>
<comment type="cofactor">
    <cofactor evidence="6">
        <name>Mg(2+)</name>
        <dbReference type="ChEBI" id="CHEBI:18420"/>
    </cofactor>
    <text evidence="6">Binds 2 Mg(2+) ions per subunit.</text>
</comment>
<comment type="subunit">
    <text evidence="1">Homodimer.</text>
</comment>
<comment type="similarity">
    <text evidence="6">Belongs to the FPP/GGPP synthase family.</text>
</comment>
<feature type="chain" id="PRO_0000419206" description="Geranylfarnesyl diphosphate synthase">
    <location>
        <begin position="1"/>
        <end position="318"/>
    </location>
</feature>
<feature type="binding site" evidence="2">
    <location>
        <position position="31"/>
    </location>
    <ligand>
        <name>isopentenyl diphosphate</name>
        <dbReference type="ChEBI" id="CHEBI:128769"/>
    </ligand>
</feature>
<feature type="binding site" evidence="2">
    <location>
        <position position="34"/>
    </location>
    <ligand>
        <name>isopentenyl diphosphate</name>
        <dbReference type="ChEBI" id="CHEBI:128769"/>
    </ligand>
</feature>
<feature type="binding site" evidence="3">
    <location>
        <position position="65"/>
    </location>
    <ligand>
        <name>isopentenyl diphosphate</name>
        <dbReference type="ChEBI" id="CHEBI:128769"/>
    </ligand>
</feature>
<feature type="binding site" evidence="2">
    <location>
        <position position="72"/>
    </location>
    <ligand>
        <name>Mg(2+)</name>
        <dbReference type="ChEBI" id="CHEBI:18420"/>
        <label>1</label>
    </ligand>
</feature>
<feature type="binding site" evidence="2">
    <location>
        <position position="72"/>
    </location>
    <ligand>
        <name>Mg(2+)</name>
        <dbReference type="ChEBI" id="CHEBI:18420"/>
        <label>2</label>
    </ligand>
</feature>
<feature type="binding site" evidence="2">
    <location>
        <position position="76"/>
    </location>
    <ligand>
        <name>Mg(2+)</name>
        <dbReference type="ChEBI" id="CHEBI:18420"/>
        <label>1</label>
    </ligand>
</feature>
<feature type="binding site" evidence="2">
    <location>
        <position position="76"/>
    </location>
    <ligand>
        <name>Mg(2+)</name>
        <dbReference type="ChEBI" id="CHEBI:18420"/>
        <label>2</label>
    </ligand>
</feature>
<feature type="binding site" evidence="1">
    <location>
        <position position="81"/>
    </location>
    <ligand>
        <name>an all-trans-polyprenyl diphosphate</name>
        <dbReference type="ChEBI" id="CHEBI:58914"/>
    </ligand>
</feature>
<feature type="binding site" evidence="2">
    <location>
        <position position="82"/>
    </location>
    <ligand>
        <name>isopentenyl diphosphate</name>
        <dbReference type="ChEBI" id="CHEBI:128769"/>
    </ligand>
</feature>
<feature type="binding site" evidence="1">
    <location>
        <position position="166"/>
    </location>
    <ligand>
        <name>an all-trans-polyprenyl diphosphate</name>
        <dbReference type="ChEBI" id="CHEBI:58914"/>
    </ligand>
</feature>
<feature type="binding site" evidence="1">
    <location>
        <position position="167"/>
    </location>
    <ligand>
        <name>an all-trans-polyprenyl diphosphate</name>
        <dbReference type="ChEBI" id="CHEBI:58914"/>
    </ligand>
</feature>
<feature type="binding site" evidence="1">
    <location>
        <position position="204"/>
    </location>
    <ligand>
        <name>an all-trans-polyprenyl diphosphate</name>
        <dbReference type="ChEBI" id="CHEBI:58914"/>
    </ligand>
</feature>
<feature type="site" description="The 8th amino acid upstream of the first aspartate-rich motif (FARM) is an important determinant in controlling the chain elongation of C25 FGPP synthase">
    <location>
        <position position="64"/>
    </location>
</feature>
<feature type="mutagenesis site" description="Produces only C20 (GGPP) as a final product. It seems to block further chain elongation of GGPP to GFPP." evidence="5">
    <original>A</original>
    <variation>T</variation>
    <location>
        <position position="64"/>
    </location>
</feature>
<feature type="mutagenesis site" description="Produces only C20 (GGPP) as a final product. It seems to block further chain elongation of GGPP to GFPP." evidence="5">
    <original>A</original>
    <variation>V</variation>
    <location>
        <position position="64"/>
    </location>
</feature>
<feature type="mutagenesis site" description="Produces a mixed population of C15 (FPP) and C20 (GGPP); when associated with R-88; M-177 and V-191." evidence="5">
    <original>V</original>
    <variation>I</variation>
    <location>
        <position position="84"/>
    </location>
</feature>
<feature type="mutagenesis site" description="Produces a mixed population of C15 (FPP) and C20 (GGPP); when associated with I-84; M-177 and V-191." evidence="5">
    <original>H</original>
    <variation>R</variation>
    <location>
        <position position="88"/>
    </location>
</feature>
<feature type="mutagenesis site" description="Produces a mixed population of C15 (FPP) and C20 (GGPP); when associated with I-84; R-88 and V-191." evidence="5">
    <original>I</original>
    <variation>M</variation>
    <location>
        <position position="177"/>
    </location>
</feature>
<feature type="mutagenesis site" description="Produces a mixed population of C15 (FPP) and C20 (GGPP); when associated with I-84; R-88 and M-177." evidence="5">
    <original>M</original>
    <variation>V</variation>
    <location>
        <position position="191"/>
    </location>
</feature>
<name>GFPS_AERPX</name>
<gene>
    <name type="primary">fgs</name>
</gene>
<organism>
    <name type="scientific">Aeropyrum pernix</name>
    <dbReference type="NCBI Taxonomy" id="56636"/>
    <lineage>
        <taxon>Archaea</taxon>
        <taxon>Thermoproteota</taxon>
        <taxon>Thermoprotei</taxon>
        <taxon>Desulfurococcales</taxon>
        <taxon>Desulfurococcaceae</taxon>
        <taxon>Aeropyrum</taxon>
    </lineage>
</organism>
<reference key="1">
    <citation type="journal article" date="2000" name="Eur. J. Biochem.">
        <title>Novel prenyltransferase gene encoding farnesylgeranyl diphosphate synthase from a hyperthermophilic archaeon, Aeropyrum pernix. Molecularevolution with alteration in product specificity.</title>
        <authorList>
            <person name="Tachibana A."/>
            <person name="Yano Y."/>
            <person name="Otani S."/>
            <person name="Nomura N."/>
            <person name="Sako Y."/>
            <person name="Taniguchi M."/>
        </authorList>
    </citation>
    <scope>NUCLEOTIDE SEQUENCE [GENOMIC DNA]</scope>
    <scope>FUNCTION AS A GERANYLFARNESYL DIPHOSPHATE</scope>
    <scope>SUBSTRATE SPECIFICITY</scope>
</reference>
<reference key="2">
    <citation type="journal article" date="2004" name="Protein Eng. Des. Sel.">
        <title>Alteration of product specificity of Aeropyrum pernix farnesylgeranyl diphosphate synthase (Fgs) by directed evolution.</title>
        <authorList>
            <person name="Lee P.C."/>
            <person name="Mijts B.N."/>
            <person name="Petri R."/>
            <person name="Watts K.T."/>
            <person name="Schmidt-Dannert C."/>
        </authorList>
    </citation>
    <scope>FUNCTION AS A GERANYLFARNESYL DIPHOSPHATE SYNTHASE</scope>
    <scope>MUTAGENESIS OF ALA-64; VAL-84; HIS-88; ILE-177 AND MET-191</scope>
    <scope>CHAIN ELONGATION SPECIFICITY</scope>
</reference>
<keyword id="KW-0444">Lipid biosynthesis</keyword>
<keyword id="KW-0443">Lipid metabolism</keyword>
<keyword id="KW-0460">Magnesium</keyword>
<keyword id="KW-0479">Metal-binding</keyword>
<keyword id="KW-0808">Transferase</keyword>
<dbReference type="EC" id="2.5.1.81"/>
<dbReference type="EMBL" id="AB025791">
    <property type="protein sequence ID" value="BAA88983.1"/>
    <property type="molecule type" value="Genomic_DNA"/>
</dbReference>
<dbReference type="SMR" id="Q9UWR6"/>
<dbReference type="KEGG" id="ag:BAA88983"/>
<dbReference type="BioCyc" id="MetaCyc:MONOMER-15678"/>
<dbReference type="BRENDA" id="2.5.1.81">
    <property type="organism ID" value="171"/>
</dbReference>
<dbReference type="GO" id="GO:0044687">
    <property type="term" value="F:geranylfarnesyl diphosphate synthase activity"/>
    <property type="evidence" value="ECO:0007669"/>
    <property type="project" value="UniProtKB-EC"/>
</dbReference>
<dbReference type="GO" id="GO:0046872">
    <property type="term" value="F:metal ion binding"/>
    <property type="evidence" value="ECO:0007669"/>
    <property type="project" value="UniProtKB-KW"/>
</dbReference>
<dbReference type="GO" id="GO:0004659">
    <property type="term" value="F:prenyltransferase activity"/>
    <property type="evidence" value="ECO:0000314"/>
    <property type="project" value="UniProtKB"/>
</dbReference>
<dbReference type="GO" id="GO:0008299">
    <property type="term" value="P:isoprenoid biosynthetic process"/>
    <property type="evidence" value="ECO:0007669"/>
    <property type="project" value="InterPro"/>
</dbReference>
<dbReference type="CDD" id="cd00685">
    <property type="entry name" value="Trans_IPPS_HT"/>
    <property type="match status" value="1"/>
</dbReference>
<dbReference type="Gene3D" id="1.10.600.10">
    <property type="entry name" value="Farnesyl Diphosphate Synthase"/>
    <property type="match status" value="1"/>
</dbReference>
<dbReference type="InterPro" id="IPR008949">
    <property type="entry name" value="Isoprenoid_synthase_dom_sf"/>
</dbReference>
<dbReference type="InterPro" id="IPR000092">
    <property type="entry name" value="Polyprenyl_synt"/>
</dbReference>
<dbReference type="InterPro" id="IPR033749">
    <property type="entry name" value="Polyprenyl_synt_CS"/>
</dbReference>
<dbReference type="PANTHER" id="PTHR12001">
    <property type="entry name" value="GERANYLGERANYL PYROPHOSPHATE SYNTHASE"/>
    <property type="match status" value="1"/>
</dbReference>
<dbReference type="PANTHER" id="PTHR12001:SF85">
    <property type="entry name" value="SHORT CHAIN ISOPRENYL DIPHOSPHATE SYNTHASE"/>
    <property type="match status" value="1"/>
</dbReference>
<dbReference type="Pfam" id="PF00348">
    <property type="entry name" value="polyprenyl_synt"/>
    <property type="match status" value="1"/>
</dbReference>
<dbReference type="SFLD" id="SFLDS00005">
    <property type="entry name" value="Isoprenoid_Synthase_Type_I"/>
    <property type="match status" value="1"/>
</dbReference>
<dbReference type="SFLD" id="SFLDG01017">
    <property type="entry name" value="Polyprenyl_Transferase_Like"/>
    <property type="match status" value="1"/>
</dbReference>
<dbReference type="SUPFAM" id="SSF48576">
    <property type="entry name" value="Terpenoid synthases"/>
    <property type="match status" value="1"/>
</dbReference>
<dbReference type="PROSITE" id="PS00723">
    <property type="entry name" value="POLYPRENYL_SYNTHASE_1"/>
    <property type="match status" value="1"/>
</dbReference>
<sequence>MLIDHYIMDFMSITPDRLSGASLHLIKAGGKRLRPLITLLTARMLGGLEAEARAIPLAASIETAHTFSLIHDDIMDRDEVRRGVPTTHVVYGDDWAILAGDTLHAAAFKMIADSREWGMSHEQAYRAFKVLSEAAIQISRGQAYDMLFEETWDVDVADYLNMVRLKTGALIEAAARIGAVAAGAGSEIEKMMGEVGMNAGIAFQIRDDILGVIGDPKVTGKPVYNDLRRGKKTLLVIYAVKKAGRREIVDLIGPKASEDDLKRAASIIVDSGALDYAESRARFYVERARDILSRVPAVDAESKELLNLLLDYIVERVK</sequence>
<protein>
    <recommendedName>
        <fullName>Geranylfarnesyl diphosphate synthase</fullName>
        <shortName>GFPS</shortName>
        <ecNumber>2.5.1.81</ecNumber>
    </recommendedName>
    <alternativeName>
        <fullName>Farnesylgeranyl diphosphate synthase</fullName>
        <shortName>FGPP synthase</shortName>
    </alternativeName>
</protein>
<proteinExistence type="evidence at protein level"/>
<evidence type="ECO:0000250" key="1"/>
<evidence type="ECO:0000250" key="2">
    <source>
        <dbReference type="UniProtKB" id="P14324"/>
    </source>
</evidence>
<evidence type="ECO:0000250" key="3">
    <source>
        <dbReference type="UniProtKB" id="Q12051"/>
    </source>
</evidence>
<evidence type="ECO:0000269" key="4">
    <source>
    </source>
</evidence>
<evidence type="ECO:0000269" key="5">
    <source>
    </source>
</evidence>
<evidence type="ECO:0000305" key="6"/>
<accession>Q9UWR6</accession>